<comment type="function">
    <text evidence="1">Catalyzes the isomerization between 2-isopropylmalate and 3-isopropylmalate, via the formation of 2-isopropylmaleate.</text>
</comment>
<comment type="catalytic activity">
    <reaction evidence="1">
        <text>(2R,3S)-3-isopropylmalate = (2S)-2-isopropylmalate</text>
        <dbReference type="Rhea" id="RHEA:32287"/>
        <dbReference type="ChEBI" id="CHEBI:1178"/>
        <dbReference type="ChEBI" id="CHEBI:35121"/>
        <dbReference type="EC" id="4.2.1.33"/>
    </reaction>
</comment>
<comment type="cofactor">
    <cofactor evidence="1">
        <name>[4Fe-4S] cluster</name>
        <dbReference type="ChEBI" id="CHEBI:49883"/>
    </cofactor>
    <text evidence="1">Binds 1 [4Fe-4S] cluster per subunit.</text>
</comment>
<comment type="pathway">
    <text evidence="1">Amino-acid biosynthesis; L-leucine biosynthesis; L-leucine from 3-methyl-2-oxobutanoate: step 2/4.</text>
</comment>
<comment type="subunit">
    <text evidence="1">Heterodimer of LeuC and LeuD.</text>
</comment>
<comment type="similarity">
    <text evidence="1">Belongs to the aconitase/IPM isomerase family. LeuC type 1 subfamily.</text>
</comment>
<sequence length="474" mass="51042">MAGKTLYDKLWDMHLVKQRDDGSALIYIDRHILHEVTSPQAFEGLRLAGRKPWRIDANIATPDHNVPTTRTERKGGIAAIADEVSRLQVQTLDENCDDFGITEFKMNDVRQGIVHVVGPEQGATLPGMTVVCGDSHTSTHGAFGALAHGIGTSEVEHVLATQCLVAKKMKNMLVKVEGRLPAGVTAKDIVLAVIGRIGTAGGNGHAIEFAGSAIRDLSIEGRMTICNMSIEAGARVGLVAVDQKTIDYVKGRPFAPSAEQWDQAVACWQGLVSDADARFDTVVELDAAQIKPQVSWGTSPEMVLAVDQNVPDPARESDPIKRGSIERALKYMGLRPNQAITDIQLDRVFIGSCTNSRIEDLRAAAEVARGRKVAATIKQALVVPGSGLVKEQAEKEGLDRIFIEAGFEWREPGCSMCLAMNPDRLESGEHCASTSNRNFEGRQGAGGRTHLVSPAMAAAAAVNGRFIDVRELLA</sequence>
<keyword id="KW-0004">4Fe-4S</keyword>
<keyword id="KW-0028">Amino-acid biosynthesis</keyword>
<keyword id="KW-0100">Branched-chain amino acid biosynthesis</keyword>
<keyword id="KW-0408">Iron</keyword>
<keyword id="KW-0411">Iron-sulfur</keyword>
<keyword id="KW-0432">Leucine biosynthesis</keyword>
<keyword id="KW-0456">Lyase</keyword>
<keyword id="KW-0479">Metal-binding</keyword>
<proteinExistence type="inferred from homology"/>
<protein>
    <recommendedName>
        <fullName evidence="1">3-isopropylmalate dehydratase large subunit</fullName>
        <ecNumber evidence="1">4.2.1.33</ecNumber>
    </recommendedName>
    <alternativeName>
        <fullName evidence="1">Alpha-IPM isomerase</fullName>
        <shortName evidence="1">IPMI</shortName>
    </alternativeName>
    <alternativeName>
        <fullName evidence="1">Isopropylmalate isomerase</fullName>
    </alternativeName>
</protein>
<evidence type="ECO:0000255" key="1">
    <source>
        <dbReference type="HAMAP-Rule" id="MF_01026"/>
    </source>
</evidence>
<reference key="1">
    <citation type="journal article" date="2006" name="Genome Biol.">
        <title>Genomic analysis reveals that Pseudomonas aeruginosa virulence is combinatorial.</title>
        <authorList>
            <person name="Lee D.G."/>
            <person name="Urbach J.M."/>
            <person name="Wu G."/>
            <person name="Liberati N.T."/>
            <person name="Feinbaum R.L."/>
            <person name="Miyata S."/>
            <person name="Diggins L.T."/>
            <person name="He J."/>
            <person name="Saucier M."/>
            <person name="Deziel E."/>
            <person name="Friedman L."/>
            <person name="Li L."/>
            <person name="Grills G."/>
            <person name="Montgomery K."/>
            <person name="Kucherlapati R."/>
            <person name="Rahme L.G."/>
            <person name="Ausubel F.M."/>
        </authorList>
    </citation>
    <scope>NUCLEOTIDE SEQUENCE [LARGE SCALE GENOMIC DNA]</scope>
    <source>
        <strain>UCBPP-PA14</strain>
    </source>
</reference>
<gene>
    <name evidence="1" type="primary">leuC</name>
    <name type="ordered locus">PA14_23750</name>
</gene>
<name>LEUC_PSEAB</name>
<organism>
    <name type="scientific">Pseudomonas aeruginosa (strain UCBPP-PA14)</name>
    <dbReference type="NCBI Taxonomy" id="208963"/>
    <lineage>
        <taxon>Bacteria</taxon>
        <taxon>Pseudomonadati</taxon>
        <taxon>Pseudomonadota</taxon>
        <taxon>Gammaproteobacteria</taxon>
        <taxon>Pseudomonadales</taxon>
        <taxon>Pseudomonadaceae</taxon>
        <taxon>Pseudomonas</taxon>
    </lineage>
</organism>
<dbReference type="EC" id="4.2.1.33" evidence="1"/>
<dbReference type="EMBL" id="CP000438">
    <property type="protein sequence ID" value="ABJ12353.1"/>
    <property type="molecule type" value="Genomic_DNA"/>
</dbReference>
<dbReference type="RefSeq" id="WP_003091399.1">
    <property type="nucleotide sequence ID" value="NZ_CP034244.1"/>
</dbReference>
<dbReference type="SMR" id="Q02PT4"/>
<dbReference type="KEGG" id="pau:PA14_23750"/>
<dbReference type="PseudoCAP" id="PA14_23750"/>
<dbReference type="HOGENOM" id="CLU_006714_3_4_6"/>
<dbReference type="BioCyc" id="PAER208963:G1G74-1981-MONOMER"/>
<dbReference type="UniPathway" id="UPA00048">
    <property type="reaction ID" value="UER00071"/>
</dbReference>
<dbReference type="Proteomes" id="UP000000653">
    <property type="component" value="Chromosome"/>
</dbReference>
<dbReference type="GO" id="GO:0003861">
    <property type="term" value="F:3-isopropylmalate dehydratase activity"/>
    <property type="evidence" value="ECO:0007669"/>
    <property type="project" value="UniProtKB-UniRule"/>
</dbReference>
<dbReference type="GO" id="GO:0051539">
    <property type="term" value="F:4 iron, 4 sulfur cluster binding"/>
    <property type="evidence" value="ECO:0007669"/>
    <property type="project" value="UniProtKB-KW"/>
</dbReference>
<dbReference type="GO" id="GO:0046872">
    <property type="term" value="F:metal ion binding"/>
    <property type="evidence" value="ECO:0007669"/>
    <property type="project" value="UniProtKB-KW"/>
</dbReference>
<dbReference type="GO" id="GO:0009098">
    <property type="term" value="P:L-leucine biosynthetic process"/>
    <property type="evidence" value="ECO:0007669"/>
    <property type="project" value="UniProtKB-UniRule"/>
</dbReference>
<dbReference type="CDD" id="cd01583">
    <property type="entry name" value="IPMI"/>
    <property type="match status" value="1"/>
</dbReference>
<dbReference type="FunFam" id="3.30.499.10:FF:000007">
    <property type="entry name" value="3-isopropylmalate dehydratase large subunit"/>
    <property type="match status" value="1"/>
</dbReference>
<dbReference type="Gene3D" id="3.30.499.10">
    <property type="entry name" value="Aconitase, domain 3"/>
    <property type="match status" value="2"/>
</dbReference>
<dbReference type="HAMAP" id="MF_01026">
    <property type="entry name" value="LeuC_type1"/>
    <property type="match status" value="1"/>
</dbReference>
<dbReference type="InterPro" id="IPR004430">
    <property type="entry name" value="3-IsopropMal_deHydase_lsu"/>
</dbReference>
<dbReference type="InterPro" id="IPR015931">
    <property type="entry name" value="Acnase/IPM_dHydase_lsu_aba_1/3"/>
</dbReference>
<dbReference type="InterPro" id="IPR001030">
    <property type="entry name" value="Acoase/IPM_deHydtase_lsu_aba"/>
</dbReference>
<dbReference type="InterPro" id="IPR018136">
    <property type="entry name" value="Aconitase_4Fe-4S_BS"/>
</dbReference>
<dbReference type="InterPro" id="IPR036008">
    <property type="entry name" value="Aconitase_4Fe-4S_dom"/>
</dbReference>
<dbReference type="InterPro" id="IPR050067">
    <property type="entry name" value="IPM_dehydratase_rel_enz"/>
</dbReference>
<dbReference type="InterPro" id="IPR033941">
    <property type="entry name" value="IPMI_cat"/>
</dbReference>
<dbReference type="NCBIfam" id="TIGR00170">
    <property type="entry name" value="leuC"/>
    <property type="match status" value="1"/>
</dbReference>
<dbReference type="NCBIfam" id="NF004016">
    <property type="entry name" value="PRK05478.1"/>
    <property type="match status" value="1"/>
</dbReference>
<dbReference type="NCBIfam" id="NF009116">
    <property type="entry name" value="PRK12466.1"/>
    <property type="match status" value="1"/>
</dbReference>
<dbReference type="PANTHER" id="PTHR43822:SF9">
    <property type="entry name" value="3-ISOPROPYLMALATE DEHYDRATASE"/>
    <property type="match status" value="1"/>
</dbReference>
<dbReference type="PANTHER" id="PTHR43822">
    <property type="entry name" value="HOMOACONITASE, MITOCHONDRIAL-RELATED"/>
    <property type="match status" value="1"/>
</dbReference>
<dbReference type="Pfam" id="PF00330">
    <property type="entry name" value="Aconitase"/>
    <property type="match status" value="1"/>
</dbReference>
<dbReference type="PRINTS" id="PR00415">
    <property type="entry name" value="ACONITASE"/>
</dbReference>
<dbReference type="SUPFAM" id="SSF53732">
    <property type="entry name" value="Aconitase iron-sulfur domain"/>
    <property type="match status" value="1"/>
</dbReference>
<dbReference type="PROSITE" id="PS00450">
    <property type="entry name" value="ACONITASE_1"/>
    <property type="match status" value="1"/>
</dbReference>
<dbReference type="PROSITE" id="PS01244">
    <property type="entry name" value="ACONITASE_2"/>
    <property type="match status" value="1"/>
</dbReference>
<accession>Q02PT4</accession>
<feature type="chain" id="PRO_1000063591" description="3-isopropylmalate dehydratase large subunit">
    <location>
        <begin position="1"/>
        <end position="474"/>
    </location>
</feature>
<feature type="binding site" evidence="1">
    <location>
        <position position="353"/>
    </location>
    <ligand>
        <name>[4Fe-4S] cluster</name>
        <dbReference type="ChEBI" id="CHEBI:49883"/>
    </ligand>
</feature>
<feature type="binding site" evidence="1">
    <location>
        <position position="414"/>
    </location>
    <ligand>
        <name>[4Fe-4S] cluster</name>
        <dbReference type="ChEBI" id="CHEBI:49883"/>
    </ligand>
</feature>
<feature type="binding site" evidence="1">
    <location>
        <position position="417"/>
    </location>
    <ligand>
        <name>[4Fe-4S] cluster</name>
        <dbReference type="ChEBI" id="CHEBI:49883"/>
    </ligand>
</feature>